<comment type="function">
    <text evidence="1">Catalyzes the last two sequential reactions in the de novo biosynthetic pathway for UDP-N-acetylglucosamine (UDP-GlcNAc). The C-terminal domain catalyzes the transfer of acetyl group from acetyl coenzyme A to glucosamine-1-phosphate (GlcN-1-P) to produce N-acetylglucosamine-1-phosphate (GlcNAc-1-P), which is converted into UDP-GlcNAc by the transfer of uridine 5-monophosphate (from uridine 5-triphosphate), a reaction catalyzed by the N-terminal domain.</text>
</comment>
<comment type="catalytic activity">
    <reaction evidence="1">
        <text>alpha-D-glucosamine 1-phosphate + acetyl-CoA = N-acetyl-alpha-D-glucosamine 1-phosphate + CoA + H(+)</text>
        <dbReference type="Rhea" id="RHEA:13725"/>
        <dbReference type="ChEBI" id="CHEBI:15378"/>
        <dbReference type="ChEBI" id="CHEBI:57287"/>
        <dbReference type="ChEBI" id="CHEBI:57288"/>
        <dbReference type="ChEBI" id="CHEBI:57776"/>
        <dbReference type="ChEBI" id="CHEBI:58516"/>
        <dbReference type="EC" id="2.3.1.157"/>
    </reaction>
</comment>
<comment type="catalytic activity">
    <reaction evidence="1">
        <text>N-acetyl-alpha-D-glucosamine 1-phosphate + UTP + H(+) = UDP-N-acetyl-alpha-D-glucosamine + diphosphate</text>
        <dbReference type="Rhea" id="RHEA:13509"/>
        <dbReference type="ChEBI" id="CHEBI:15378"/>
        <dbReference type="ChEBI" id="CHEBI:33019"/>
        <dbReference type="ChEBI" id="CHEBI:46398"/>
        <dbReference type="ChEBI" id="CHEBI:57705"/>
        <dbReference type="ChEBI" id="CHEBI:57776"/>
        <dbReference type="EC" id="2.7.7.23"/>
    </reaction>
</comment>
<comment type="cofactor">
    <cofactor evidence="1">
        <name>Mg(2+)</name>
        <dbReference type="ChEBI" id="CHEBI:18420"/>
    </cofactor>
    <text evidence="1">Binds 1 Mg(2+) ion per subunit.</text>
</comment>
<comment type="pathway">
    <text evidence="1">Nucleotide-sugar biosynthesis; UDP-N-acetyl-alpha-D-glucosamine biosynthesis; N-acetyl-alpha-D-glucosamine 1-phosphate from alpha-D-glucosamine 6-phosphate (route II): step 2/2.</text>
</comment>
<comment type="pathway">
    <text evidence="1">Nucleotide-sugar biosynthesis; UDP-N-acetyl-alpha-D-glucosamine biosynthesis; UDP-N-acetyl-alpha-D-glucosamine from N-acetyl-alpha-D-glucosamine 1-phosphate: step 1/1.</text>
</comment>
<comment type="pathway">
    <text evidence="1">Bacterial outer membrane biogenesis; LPS lipid A biosynthesis.</text>
</comment>
<comment type="subunit">
    <text evidence="1">Homotrimer.</text>
</comment>
<comment type="subcellular location">
    <subcellularLocation>
        <location evidence="1">Cytoplasm</location>
    </subcellularLocation>
</comment>
<comment type="similarity">
    <text evidence="1">In the N-terminal section; belongs to the N-acetylglucosamine-1-phosphate uridyltransferase family.</text>
</comment>
<comment type="similarity">
    <text evidence="1">In the C-terminal section; belongs to the transferase hexapeptide repeat family.</text>
</comment>
<gene>
    <name evidence="1" type="primary">glmU</name>
    <name type="ordered locus">NGO_2053</name>
</gene>
<organism>
    <name type="scientific">Neisseria gonorrhoeae (strain ATCC 700825 / FA 1090)</name>
    <dbReference type="NCBI Taxonomy" id="242231"/>
    <lineage>
        <taxon>Bacteria</taxon>
        <taxon>Pseudomonadati</taxon>
        <taxon>Pseudomonadota</taxon>
        <taxon>Betaproteobacteria</taxon>
        <taxon>Neisseriales</taxon>
        <taxon>Neisseriaceae</taxon>
        <taxon>Neisseria</taxon>
    </lineage>
</organism>
<protein>
    <recommendedName>
        <fullName evidence="1">Bifunctional protein GlmU</fullName>
    </recommendedName>
    <domain>
        <recommendedName>
            <fullName evidence="1">UDP-N-acetylglucosamine pyrophosphorylase</fullName>
            <ecNumber evidence="1">2.7.7.23</ecNumber>
        </recommendedName>
        <alternativeName>
            <fullName evidence="1">N-acetylglucosamine-1-phosphate uridyltransferase</fullName>
        </alternativeName>
    </domain>
    <domain>
        <recommendedName>
            <fullName evidence="1">Glucosamine-1-phosphate N-acetyltransferase</fullName>
            <ecNumber evidence="1">2.3.1.157</ecNumber>
        </recommendedName>
    </domain>
</protein>
<evidence type="ECO:0000255" key="1">
    <source>
        <dbReference type="HAMAP-Rule" id="MF_01631"/>
    </source>
</evidence>
<name>GLMU_NEIG1</name>
<dbReference type="EC" id="2.7.7.23" evidence="1"/>
<dbReference type="EC" id="2.3.1.157" evidence="1"/>
<dbReference type="EMBL" id="AE004969">
    <property type="protein sequence ID" value="AAW90660.1"/>
    <property type="molecule type" value="Genomic_DNA"/>
</dbReference>
<dbReference type="RefSeq" id="WP_003686996.1">
    <property type="nucleotide sequence ID" value="NC_002946.2"/>
</dbReference>
<dbReference type="RefSeq" id="YP_209072.1">
    <property type="nucleotide sequence ID" value="NC_002946.2"/>
</dbReference>
<dbReference type="SMR" id="Q5F577"/>
<dbReference type="STRING" id="242231.NGO_2053"/>
<dbReference type="KEGG" id="ngo:NGO_2053"/>
<dbReference type="PATRIC" id="fig|242231.10.peg.2476"/>
<dbReference type="HOGENOM" id="CLU_029499_15_2_4"/>
<dbReference type="UniPathway" id="UPA00113">
    <property type="reaction ID" value="UER00532"/>
</dbReference>
<dbReference type="UniPathway" id="UPA00113">
    <property type="reaction ID" value="UER00533"/>
</dbReference>
<dbReference type="UniPathway" id="UPA00973"/>
<dbReference type="Proteomes" id="UP000000535">
    <property type="component" value="Chromosome"/>
</dbReference>
<dbReference type="GO" id="GO:0005737">
    <property type="term" value="C:cytoplasm"/>
    <property type="evidence" value="ECO:0007669"/>
    <property type="project" value="UniProtKB-SubCell"/>
</dbReference>
<dbReference type="GO" id="GO:0016020">
    <property type="term" value="C:membrane"/>
    <property type="evidence" value="ECO:0007669"/>
    <property type="project" value="GOC"/>
</dbReference>
<dbReference type="GO" id="GO:0019134">
    <property type="term" value="F:glucosamine-1-phosphate N-acetyltransferase activity"/>
    <property type="evidence" value="ECO:0007669"/>
    <property type="project" value="UniProtKB-UniRule"/>
</dbReference>
<dbReference type="GO" id="GO:0000287">
    <property type="term" value="F:magnesium ion binding"/>
    <property type="evidence" value="ECO:0007669"/>
    <property type="project" value="UniProtKB-UniRule"/>
</dbReference>
<dbReference type="GO" id="GO:0003977">
    <property type="term" value="F:UDP-N-acetylglucosamine diphosphorylase activity"/>
    <property type="evidence" value="ECO:0007669"/>
    <property type="project" value="UniProtKB-UniRule"/>
</dbReference>
<dbReference type="GO" id="GO:0000902">
    <property type="term" value="P:cell morphogenesis"/>
    <property type="evidence" value="ECO:0007669"/>
    <property type="project" value="UniProtKB-UniRule"/>
</dbReference>
<dbReference type="GO" id="GO:0071555">
    <property type="term" value="P:cell wall organization"/>
    <property type="evidence" value="ECO:0007669"/>
    <property type="project" value="UniProtKB-KW"/>
</dbReference>
<dbReference type="GO" id="GO:0009245">
    <property type="term" value="P:lipid A biosynthetic process"/>
    <property type="evidence" value="ECO:0007669"/>
    <property type="project" value="UniProtKB-UniRule"/>
</dbReference>
<dbReference type="GO" id="GO:0009252">
    <property type="term" value="P:peptidoglycan biosynthetic process"/>
    <property type="evidence" value="ECO:0007669"/>
    <property type="project" value="UniProtKB-UniRule"/>
</dbReference>
<dbReference type="GO" id="GO:0008360">
    <property type="term" value="P:regulation of cell shape"/>
    <property type="evidence" value="ECO:0007669"/>
    <property type="project" value="UniProtKB-KW"/>
</dbReference>
<dbReference type="GO" id="GO:0006048">
    <property type="term" value="P:UDP-N-acetylglucosamine biosynthetic process"/>
    <property type="evidence" value="ECO:0007669"/>
    <property type="project" value="UniProtKB-UniPathway"/>
</dbReference>
<dbReference type="CDD" id="cd02540">
    <property type="entry name" value="GT2_GlmU_N_bac"/>
    <property type="match status" value="1"/>
</dbReference>
<dbReference type="CDD" id="cd03353">
    <property type="entry name" value="LbH_GlmU_C"/>
    <property type="match status" value="1"/>
</dbReference>
<dbReference type="Gene3D" id="2.160.10.10">
    <property type="entry name" value="Hexapeptide repeat proteins"/>
    <property type="match status" value="1"/>
</dbReference>
<dbReference type="Gene3D" id="3.90.550.10">
    <property type="entry name" value="Spore Coat Polysaccharide Biosynthesis Protein SpsA, Chain A"/>
    <property type="match status" value="1"/>
</dbReference>
<dbReference type="HAMAP" id="MF_01631">
    <property type="entry name" value="GlmU"/>
    <property type="match status" value="1"/>
</dbReference>
<dbReference type="InterPro" id="IPR005882">
    <property type="entry name" value="Bifunctional_GlmU"/>
</dbReference>
<dbReference type="InterPro" id="IPR050065">
    <property type="entry name" value="GlmU-like"/>
</dbReference>
<dbReference type="InterPro" id="IPR038009">
    <property type="entry name" value="GlmU_C_LbH"/>
</dbReference>
<dbReference type="InterPro" id="IPR001451">
    <property type="entry name" value="Hexapep"/>
</dbReference>
<dbReference type="InterPro" id="IPR025877">
    <property type="entry name" value="MobA-like_NTP_Trfase"/>
</dbReference>
<dbReference type="InterPro" id="IPR029044">
    <property type="entry name" value="Nucleotide-diphossugar_trans"/>
</dbReference>
<dbReference type="InterPro" id="IPR011004">
    <property type="entry name" value="Trimer_LpxA-like_sf"/>
</dbReference>
<dbReference type="NCBIfam" id="TIGR01173">
    <property type="entry name" value="glmU"/>
    <property type="match status" value="1"/>
</dbReference>
<dbReference type="PANTHER" id="PTHR43584:SF3">
    <property type="entry name" value="BIFUNCTIONAL PROTEIN GLMU"/>
    <property type="match status" value="1"/>
</dbReference>
<dbReference type="PANTHER" id="PTHR43584">
    <property type="entry name" value="NUCLEOTIDYL TRANSFERASE"/>
    <property type="match status" value="1"/>
</dbReference>
<dbReference type="Pfam" id="PF00132">
    <property type="entry name" value="Hexapep"/>
    <property type="match status" value="2"/>
</dbReference>
<dbReference type="Pfam" id="PF12804">
    <property type="entry name" value="NTP_transf_3"/>
    <property type="match status" value="1"/>
</dbReference>
<dbReference type="SUPFAM" id="SSF53448">
    <property type="entry name" value="Nucleotide-diphospho-sugar transferases"/>
    <property type="match status" value="1"/>
</dbReference>
<dbReference type="SUPFAM" id="SSF51161">
    <property type="entry name" value="Trimeric LpxA-like enzymes"/>
    <property type="match status" value="1"/>
</dbReference>
<feature type="chain" id="PRO_0000233803" description="Bifunctional protein GlmU">
    <location>
        <begin position="1"/>
        <end position="456"/>
    </location>
</feature>
<feature type="region of interest" description="Pyrophosphorylase" evidence="1">
    <location>
        <begin position="1"/>
        <end position="228"/>
    </location>
</feature>
<feature type="region of interest" description="Linker" evidence="1">
    <location>
        <begin position="229"/>
        <end position="249"/>
    </location>
</feature>
<feature type="region of interest" description="N-acetyltransferase" evidence="1">
    <location>
        <begin position="250"/>
        <end position="456"/>
    </location>
</feature>
<feature type="active site" description="Proton acceptor" evidence="1">
    <location>
        <position position="362"/>
    </location>
</feature>
<feature type="binding site" evidence="1">
    <location>
        <begin position="11"/>
        <end position="14"/>
    </location>
    <ligand>
        <name>UDP-N-acetyl-alpha-D-glucosamine</name>
        <dbReference type="ChEBI" id="CHEBI:57705"/>
    </ligand>
</feature>
<feature type="binding site" evidence="1">
    <location>
        <position position="25"/>
    </location>
    <ligand>
        <name>UDP-N-acetyl-alpha-D-glucosamine</name>
        <dbReference type="ChEBI" id="CHEBI:57705"/>
    </ligand>
</feature>
<feature type="binding site" evidence="1">
    <location>
        <position position="75"/>
    </location>
    <ligand>
        <name>UDP-N-acetyl-alpha-D-glucosamine</name>
        <dbReference type="ChEBI" id="CHEBI:57705"/>
    </ligand>
</feature>
<feature type="binding site" evidence="1">
    <location>
        <begin position="80"/>
        <end position="81"/>
    </location>
    <ligand>
        <name>UDP-N-acetyl-alpha-D-glucosamine</name>
        <dbReference type="ChEBI" id="CHEBI:57705"/>
    </ligand>
</feature>
<feature type="binding site" evidence="1">
    <location>
        <begin position="102"/>
        <end position="104"/>
    </location>
    <ligand>
        <name>UDP-N-acetyl-alpha-D-glucosamine</name>
        <dbReference type="ChEBI" id="CHEBI:57705"/>
    </ligand>
</feature>
<feature type="binding site" evidence="1">
    <location>
        <position position="104"/>
    </location>
    <ligand>
        <name>Mg(2+)</name>
        <dbReference type="ChEBI" id="CHEBI:18420"/>
    </ligand>
</feature>
<feature type="binding site" evidence="1">
    <location>
        <position position="138"/>
    </location>
    <ligand>
        <name>UDP-N-acetyl-alpha-D-glucosamine</name>
        <dbReference type="ChEBI" id="CHEBI:57705"/>
    </ligand>
</feature>
<feature type="binding site" evidence="1">
    <location>
        <position position="153"/>
    </location>
    <ligand>
        <name>UDP-N-acetyl-alpha-D-glucosamine</name>
        <dbReference type="ChEBI" id="CHEBI:57705"/>
    </ligand>
</feature>
<feature type="binding site" evidence="1">
    <location>
        <position position="168"/>
    </location>
    <ligand>
        <name>UDP-N-acetyl-alpha-D-glucosamine</name>
        <dbReference type="ChEBI" id="CHEBI:57705"/>
    </ligand>
</feature>
<feature type="binding site" evidence="1">
    <location>
        <position position="226"/>
    </location>
    <ligand>
        <name>Mg(2+)</name>
        <dbReference type="ChEBI" id="CHEBI:18420"/>
    </ligand>
</feature>
<feature type="binding site" evidence="1">
    <location>
        <position position="226"/>
    </location>
    <ligand>
        <name>UDP-N-acetyl-alpha-D-glucosamine</name>
        <dbReference type="ChEBI" id="CHEBI:57705"/>
    </ligand>
</feature>
<feature type="binding site" evidence="1">
    <location>
        <position position="332"/>
    </location>
    <ligand>
        <name>UDP-N-acetyl-alpha-D-glucosamine</name>
        <dbReference type="ChEBI" id="CHEBI:57705"/>
    </ligand>
</feature>
<feature type="binding site" evidence="1">
    <location>
        <position position="350"/>
    </location>
    <ligand>
        <name>UDP-N-acetyl-alpha-D-glucosamine</name>
        <dbReference type="ChEBI" id="CHEBI:57705"/>
    </ligand>
</feature>
<feature type="binding site" evidence="1">
    <location>
        <position position="365"/>
    </location>
    <ligand>
        <name>UDP-N-acetyl-alpha-D-glucosamine</name>
        <dbReference type="ChEBI" id="CHEBI:57705"/>
    </ligand>
</feature>
<feature type="binding site" evidence="1">
    <location>
        <position position="376"/>
    </location>
    <ligand>
        <name>UDP-N-acetyl-alpha-D-glucosamine</name>
        <dbReference type="ChEBI" id="CHEBI:57705"/>
    </ligand>
</feature>
<feature type="binding site" evidence="1">
    <location>
        <position position="379"/>
    </location>
    <ligand>
        <name>acetyl-CoA</name>
        <dbReference type="ChEBI" id="CHEBI:57288"/>
    </ligand>
</feature>
<feature type="binding site" evidence="1">
    <location>
        <begin position="385"/>
        <end position="386"/>
    </location>
    <ligand>
        <name>acetyl-CoA</name>
        <dbReference type="ChEBI" id="CHEBI:57288"/>
    </ligand>
</feature>
<feature type="binding site" evidence="1">
    <location>
        <position position="404"/>
    </location>
    <ligand>
        <name>acetyl-CoA</name>
        <dbReference type="ChEBI" id="CHEBI:57288"/>
    </ligand>
</feature>
<feature type="binding site" evidence="1">
    <location>
        <position position="422"/>
    </location>
    <ligand>
        <name>acetyl-CoA</name>
        <dbReference type="ChEBI" id="CHEBI:57288"/>
    </ligand>
</feature>
<feature type="binding site" evidence="1">
    <location>
        <position position="439"/>
    </location>
    <ligand>
        <name>acetyl-CoA</name>
        <dbReference type="ChEBI" id="CHEBI:57288"/>
    </ligand>
</feature>
<reference key="1">
    <citation type="submission" date="2003-03" db="EMBL/GenBank/DDBJ databases">
        <title>The complete genome sequence of Neisseria gonorrhoeae.</title>
        <authorList>
            <person name="Lewis L.A."/>
            <person name="Gillaspy A.F."/>
            <person name="McLaughlin R.E."/>
            <person name="Gipson M."/>
            <person name="Ducey T.F."/>
            <person name="Ownbey T."/>
            <person name="Hartman K."/>
            <person name="Nydick C."/>
            <person name="Carson M.B."/>
            <person name="Vaughn J."/>
            <person name="Thomson C."/>
            <person name="Song L."/>
            <person name="Lin S."/>
            <person name="Yuan X."/>
            <person name="Najar F."/>
            <person name="Zhan M."/>
            <person name="Ren Q."/>
            <person name="Zhu H."/>
            <person name="Qi S."/>
            <person name="Kenton S.M."/>
            <person name="Lai H."/>
            <person name="White J.D."/>
            <person name="Clifton S."/>
            <person name="Roe B.A."/>
            <person name="Dyer D.W."/>
        </authorList>
    </citation>
    <scope>NUCLEOTIDE SEQUENCE [LARGE SCALE GENOMIC DNA]</scope>
    <source>
        <strain>ATCC 700825 / FA 1090</strain>
    </source>
</reference>
<sequence>MPQNTLNTVILAAGKGTRMYSQMPKVLHCIGGKPMVERVIDTAAALNPQNICVVVGHGKEQVLDTVKRDAVWVEQTEQLGTGHAVKTALPHLASEGRTLVLYGDVPLIDVETLETLLEAAGNEVGLLTDVPADPAGLGRIIRDGSGSVTAIVEEKDASATQKTIREINTGILVLPNAKLENWLNSLSSNNAQGEYYLTDLIAKAVADGIKVRPVRVRASHLAAGVNNKRQLAELERIFQTEQAQELLKAGVTLRDPARFDLRGRLKHGQDVVIDVNVVIEGEVELGDNVEIGANCVIKNAKIGANSKIAPFSHLEGCEVGENNRIGPYARLRPQAKLADNVHVGNFVEIKNAAIGKGTKANHLTYIGDAEVGSKTNFGAGTIIANYDGVHKHKTVIGDEVRIGSNCVLVAPVTLGNKVTTGAGSTITRNIEDNKLALARARQTVIEGWMRPEKDKQ</sequence>
<keyword id="KW-0012">Acyltransferase</keyword>
<keyword id="KW-0133">Cell shape</keyword>
<keyword id="KW-0961">Cell wall biogenesis/degradation</keyword>
<keyword id="KW-0963">Cytoplasm</keyword>
<keyword id="KW-0460">Magnesium</keyword>
<keyword id="KW-0479">Metal-binding</keyword>
<keyword id="KW-0511">Multifunctional enzyme</keyword>
<keyword id="KW-0548">Nucleotidyltransferase</keyword>
<keyword id="KW-0573">Peptidoglycan synthesis</keyword>
<keyword id="KW-1185">Reference proteome</keyword>
<keyword id="KW-0677">Repeat</keyword>
<keyword id="KW-0808">Transferase</keyword>
<proteinExistence type="inferred from homology"/>
<accession>Q5F577</accession>